<reference key="1">
    <citation type="journal article" date="1986" name="J. Gen. Virol.">
        <title>Evolution of vesicular stomatitis virus in athymic nude mice: mutations associated with natural killer cell selection.</title>
        <authorList>
            <person name="Vandepol S.B."/>
            <person name="Holland J.J."/>
        </authorList>
    </citation>
    <scope>NUCLEOTIDE SEQUENCE [GENOMIC RNA]</scope>
</reference>
<protein>
    <recommendedName>
        <fullName>Glycoprotein</fullName>
    </recommendedName>
</protein>
<organismHost>
    <name type="scientific">Aedes</name>
    <dbReference type="NCBI Taxonomy" id="7158"/>
</organismHost>
<organismHost>
    <name type="scientific">Bos taurus</name>
    <name type="common">Bovine</name>
    <dbReference type="NCBI Taxonomy" id="9913"/>
</organismHost>
<organismHost>
    <name type="scientific">Culicoides</name>
    <dbReference type="NCBI Taxonomy" id="58271"/>
</organismHost>
<organismHost>
    <name type="scientific">Equus asinus</name>
    <name type="common">Donkey</name>
    <name type="synonym">Equus africanus asinus</name>
    <dbReference type="NCBI Taxonomy" id="9793"/>
</organismHost>
<organismHost>
    <name type="scientific">Equus caballus</name>
    <name type="common">Horse</name>
    <dbReference type="NCBI Taxonomy" id="9796"/>
</organismHost>
<organismHost>
    <name type="scientific">Homo sapiens</name>
    <name type="common">Human</name>
    <dbReference type="NCBI Taxonomy" id="9606"/>
</organismHost>
<organismHost>
    <name type="scientific">Lutzomyia</name>
    <dbReference type="NCBI Taxonomy" id="252607"/>
</organismHost>
<organismHost>
    <name type="scientific">Musca domestica</name>
    <name type="common">House fly</name>
    <dbReference type="NCBI Taxonomy" id="7370"/>
</organismHost>
<organismHost>
    <name type="scientific">Simuliidae</name>
    <name type="common">black flies</name>
    <dbReference type="NCBI Taxonomy" id="7190"/>
</organismHost>
<organismHost>
    <name type="scientific">Sus scrofa</name>
    <name type="common">Pig</name>
    <dbReference type="NCBI Taxonomy" id="9823"/>
</organismHost>
<accession>P04883</accession>
<dbReference type="EMBL" id="X03633">
    <property type="protein sequence ID" value="CAA27283.1"/>
    <property type="molecule type" value="Genomic_RNA"/>
</dbReference>
<dbReference type="SMR" id="P04883"/>
<dbReference type="GlyCosmos" id="P04883">
    <property type="glycosylation" value="2 sites, No reported glycans"/>
</dbReference>
<dbReference type="Proteomes" id="UP000007544">
    <property type="component" value="Genome"/>
</dbReference>
<dbReference type="GO" id="GO:0033644">
    <property type="term" value="C:host cell membrane"/>
    <property type="evidence" value="ECO:0007669"/>
    <property type="project" value="UniProtKB-SubCell"/>
</dbReference>
<dbReference type="GO" id="GO:0016020">
    <property type="term" value="C:membrane"/>
    <property type="evidence" value="ECO:0007669"/>
    <property type="project" value="UniProtKB-KW"/>
</dbReference>
<dbReference type="GO" id="GO:0019031">
    <property type="term" value="C:viral envelope"/>
    <property type="evidence" value="ECO:0007669"/>
    <property type="project" value="UniProtKB-KW"/>
</dbReference>
<dbReference type="GO" id="GO:0055036">
    <property type="term" value="C:virion membrane"/>
    <property type="evidence" value="ECO:0007669"/>
    <property type="project" value="UniProtKB-SubCell"/>
</dbReference>
<dbReference type="GO" id="GO:0075512">
    <property type="term" value="P:clathrin-dependent endocytosis of virus by host cell"/>
    <property type="evidence" value="ECO:0007669"/>
    <property type="project" value="UniProtKB-KW"/>
</dbReference>
<dbReference type="GO" id="GO:0098670">
    <property type="term" value="P:entry receptor-mediated virion attachment to host cell"/>
    <property type="evidence" value="ECO:0007669"/>
    <property type="project" value="UniProtKB-KW"/>
</dbReference>
<dbReference type="GO" id="GO:0039654">
    <property type="term" value="P:fusion of virus membrane with host endosome membrane"/>
    <property type="evidence" value="ECO:0007669"/>
    <property type="project" value="UniProtKB-KW"/>
</dbReference>
<dbReference type="Gene3D" id="2.30.29.130">
    <property type="match status" value="2"/>
</dbReference>
<dbReference type="Gene3D" id="2.30.30.640">
    <property type="match status" value="2"/>
</dbReference>
<dbReference type="InterPro" id="IPR055447">
    <property type="entry name" value="Rhabdo_glycop_CD"/>
</dbReference>
<dbReference type="InterPro" id="IPR001903">
    <property type="entry name" value="Rhabdo_glycop_FD"/>
</dbReference>
<dbReference type="Pfam" id="PF24833">
    <property type="entry name" value="Rhabdo_glycop_CD"/>
    <property type="match status" value="1"/>
</dbReference>
<dbReference type="Pfam" id="PF00974">
    <property type="entry name" value="Rhabdo_glycop_FD"/>
    <property type="match status" value="1"/>
</dbReference>
<dbReference type="SUPFAM" id="SSF161008">
    <property type="entry name" value="Viral glycoprotein ectodomain-like"/>
    <property type="match status" value="1"/>
</dbReference>
<organism>
    <name type="scientific">Vesicular stomatitis Indiana virus (strain Glasgow)</name>
    <name type="common">VSIV</name>
    <dbReference type="NCBI Taxonomy" id="11278"/>
    <lineage>
        <taxon>Viruses</taxon>
        <taxon>Riboviria</taxon>
        <taxon>Orthornavirae</taxon>
        <taxon>Negarnaviricota</taxon>
        <taxon>Haploviricotina</taxon>
        <taxon>Monjiviricetes</taxon>
        <taxon>Mononegavirales</taxon>
        <taxon>Rhabdoviridae</taxon>
        <taxon>Alpharhabdovirinae</taxon>
        <taxon>Vesiculovirus</taxon>
        <taxon>Vesiculovirus indiana</taxon>
    </lineage>
</organism>
<feature type="signal peptide" evidence="4">
    <location>
        <begin position="1"/>
        <end position="16"/>
    </location>
</feature>
<feature type="chain" id="PRO_0000041002" description="Glycoprotein">
    <location>
        <begin position="17"/>
        <end position="511"/>
    </location>
</feature>
<feature type="topological domain" description="Virion surface" evidence="4">
    <location>
        <begin position="17"/>
        <end position="467"/>
    </location>
</feature>
<feature type="transmembrane region" description="Helical" evidence="4">
    <location>
        <begin position="468"/>
        <end position="488"/>
    </location>
</feature>
<feature type="topological domain" description="Intravirion" evidence="4">
    <location>
        <begin position="489"/>
        <end position="511"/>
    </location>
</feature>
<feature type="region of interest" description="Fusion peptide" evidence="3">
    <location>
        <begin position="53"/>
        <end position="172"/>
    </location>
</feature>
<feature type="region of interest" description="Trimerization" evidence="3">
    <location>
        <begin position="259"/>
        <end position="309"/>
    </location>
</feature>
<feature type="region of interest" description="Trimerization" evidence="3">
    <location>
        <begin position="383"/>
        <end position="405"/>
    </location>
</feature>
<feature type="short sequence motif" description="basolateral targeting ex vivo" evidence="1">
    <location>
        <begin position="496"/>
        <end position="506"/>
    </location>
</feature>
<feature type="site" description="Involved in the interaction with host LDL receptor" evidence="3">
    <location>
        <position position="63"/>
    </location>
</feature>
<feature type="site" description="pH sensor in the pre-fusion state" evidence="3">
    <location>
        <position position="76"/>
    </location>
</feature>
<feature type="site" description="pH sensor in the pre-fusion state" evidence="3">
    <location>
        <position position="178"/>
    </location>
</feature>
<feature type="site" description="Involved in the interaction with host LDL receptor" evidence="3">
    <location>
        <position position="370"/>
    </location>
</feature>
<feature type="site" description="pH sensor in the pre-fusion state" evidence="3">
    <location>
        <position position="423"/>
    </location>
</feature>
<feature type="glycosylation site" description="N-linked (GlcNAc...) asparagine; by host" evidence="4">
    <location>
        <position position="179"/>
    </location>
</feature>
<feature type="glycosylation site" description="N-linked (GlcNAc...) asparagine; by host" evidence="4">
    <location>
        <position position="336"/>
    </location>
</feature>
<feature type="disulfide bond" evidence="1">
    <location>
        <begin position="40"/>
        <end position="300"/>
    </location>
</feature>
<feature type="disulfide bond" evidence="1">
    <location>
        <begin position="75"/>
        <end position="108"/>
    </location>
</feature>
<feature type="disulfide bond" evidence="1">
    <location>
        <begin position="84"/>
        <end position="130"/>
    </location>
</feature>
<feature type="disulfide bond" evidence="1">
    <location>
        <begin position="169"/>
        <end position="174"/>
    </location>
</feature>
<feature type="disulfide bond" evidence="1">
    <location>
        <begin position="193"/>
        <end position="240"/>
    </location>
</feature>
<feature type="disulfide bond" evidence="1">
    <location>
        <begin position="235"/>
        <end position="269"/>
    </location>
</feature>
<keyword id="KW-1165">Clathrin-mediated endocytosis of virus by host</keyword>
<keyword id="KW-1015">Disulfide bond</keyword>
<keyword id="KW-1170">Fusion of virus membrane with host endosomal membrane</keyword>
<keyword id="KW-1168">Fusion of virus membrane with host membrane</keyword>
<keyword id="KW-0325">Glycoprotein</keyword>
<keyword id="KW-1043">Host membrane</keyword>
<keyword id="KW-0945">Host-virus interaction</keyword>
<keyword id="KW-0472">Membrane</keyword>
<keyword id="KW-0732">Signal</keyword>
<keyword id="KW-0812">Transmembrane</keyword>
<keyword id="KW-1133">Transmembrane helix</keyword>
<keyword id="KW-1161">Viral attachment to host cell</keyword>
<keyword id="KW-1234">Viral attachment to host entry receptor</keyword>
<keyword id="KW-0261">Viral envelope protein</keyword>
<keyword id="KW-1162">Viral penetration into host cytoplasm</keyword>
<keyword id="KW-0946">Virion</keyword>
<keyword id="KW-1164">Virus endocytosis by host</keyword>
<keyword id="KW-1160">Virus entry into host cell</keyword>
<gene>
    <name type="primary">G</name>
</gene>
<evidence type="ECO:0000250" key="1"/>
<evidence type="ECO:0000250" key="2">
    <source>
        <dbReference type="UniProtKB" id="P03522"/>
    </source>
</evidence>
<evidence type="ECO:0000250" key="3">
    <source>
        <dbReference type="UniProtKB" id="P0C2X0"/>
    </source>
</evidence>
<evidence type="ECO:0000255" key="4"/>
<evidence type="ECO:0000305" key="5"/>
<name>GLYCO_VSIVG</name>
<proteinExistence type="evidence at protein level"/>
<sequence length="511" mass="57692">MKCFLYLAFLFIGVNCKFTIVFPHNQKGNWKNVPSNYHYCPSSSDLNWHNDLIGTGLQVKMPKSHKAIQADGWMCHASKWVTTCDFRWYGPKYITHSIRSFTPSVEQCKESIEQTKQGTWLNPGFPPQSCGYATVTDAEAVIVQVTPHHVLVDEYTGEWVDSQFINGKCSNDICPTVHNSTTWHSDYKVKGLCDSNLISTDITFFSEDRELSSLGKEGTGFRSNYFAYETGDKACKMQYCKHWGVRLPSGVWFEMADKDLFAAARFPECPEGSSISAPSQTSVDVSLIQDVERILDYSLCQETWSKIRAGLPISPVDLSYLAPKNPGTGPAFTIINGTLKYFETRYIRVDIAAPILSRMVGMISGTTTERELWDDWAPYEDVEIGPNGVLRTSSGYKFPLYMIGHGMLDSGLHLSSKAQVFEHPHIQDAASQLPDDEILFFGDTGLSKNPIDFVEGWFSSWKSSIASFFFIIGLIIGLFLVLRVGIYLYIKLKHTKKRQIYTDIEMNRLGR</sequence>
<comment type="function">
    <text evidence="2">Attaches the virus to host LDL receptors, inducing clathrin-dependent endocytosis of the virion. In the endosome, the acidic pH induces conformational changes in the glycoprotein trimer, which trigger fusion between virus and endosomal membrane.</text>
</comment>
<comment type="subunit">
    <text evidence="2">Homotrimer. Interacts with host LDL at target cell surface.</text>
</comment>
<comment type="subcellular location">
    <subcellularLocation>
        <location evidence="2">Virion membrane</location>
        <topology evidence="2">Single-pass type I membrane protein</topology>
    </subcellularLocation>
    <subcellularLocation>
        <location evidence="2">Host membrane</location>
        <topology evidence="2">Single-pass type I membrane protein</topology>
    </subcellularLocation>
</comment>
<comment type="PTM">
    <text evidence="2">Glycosylated by host. Palmitoylated by host.</text>
</comment>
<comment type="biotechnology">
    <text>Used to pseudotype many virus-like particles like lentiviral vector, because of its broad spectrum of host cell tropism. Also used in viral vectors studies in cancer therapy.</text>
</comment>
<comment type="similarity">
    <text evidence="5">Belongs to the vesiculovirus glycoprotein family.</text>
</comment>